<comment type="function">
    <text evidence="1">Component of the EKC/KEOPS complex that is required for the formation of a threonylcarbamoyl group on adenosine at position 37 (t(6)A37) in tRNAs that read codons beginning with adenine. The complex is probably involved in the transfer of the threonylcarbamoyl moiety of threonylcarbamoyl-AMP (TC-AMP) to the N6 group of A37. CGI121 acts as an allosteric effector that regulates the t(6)A activity of the complex. The EKC/KEOPS complex also promotes both telomere uncapping and telomere elongation. The complex is required for efficient recruitment of transcriptional coactivators. CGI121 is not required for tRNA modification (By similarity).</text>
</comment>
<comment type="subunit">
    <text evidence="1">Component of the EKC/KEOPS complex composed of at least BUD32, CGI121, GON7, KAE1 and PCC1; the whole complex dimerizes.</text>
</comment>
<comment type="subcellular location">
    <subcellularLocation>
        <location evidence="1">Nucleus</location>
    </subcellularLocation>
    <subcellularLocation>
        <location evidence="1">Chromosome</location>
        <location evidence="1">Telomere</location>
    </subcellularLocation>
</comment>
<comment type="similarity">
    <text evidence="2">Belongs to the CGI121/TPRKB family.</text>
</comment>
<accession>Q4ID21</accession>
<accession>A0A098DWW5</accession>
<accession>A0A0E0SHC9</accession>
<accession>V6R823</accession>
<gene>
    <name type="primary">CGI121</name>
    <name type="ORF">FGRRES_04887</name>
    <name type="ORF">FGSG_04887</name>
</gene>
<name>CG121_GIBZE</name>
<reference key="1">
    <citation type="journal article" date="2007" name="Science">
        <title>The Fusarium graminearum genome reveals a link between localized polymorphism and pathogen specialization.</title>
        <authorList>
            <person name="Cuomo C.A."/>
            <person name="Gueldener U."/>
            <person name="Xu J.-R."/>
            <person name="Trail F."/>
            <person name="Turgeon B.G."/>
            <person name="Di Pietro A."/>
            <person name="Walton J.D."/>
            <person name="Ma L.-J."/>
            <person name="Baker S.E."/>
            <person name="Rep M."/>
            <person name="Adam G."/>
            <person name="Antoniw J."/>
            <person name="Baldwin T."/>
            <person name="Calvo S.E."/>
            <person name="Chang Y.-L."/>
            <person name="DeCaprio D."/>
            <person name="Gale L.R."/>
            <person name="Gnerre S."/>
            <person name="Goswami R.S."/>
            <person name="Hammond-Kosack K."/>
            <person name="Harris L.J."/>
            <person name="Hilburn K."/>
            <person name="Kennell J.C."/>
            <person name="Kroken S."/>
            <person name="Magnuson J.K."/>
            <person name="Mannhaupt G."/>
            <person name="Mauceli E.W."/>
            <person name="Mewes H.-W."/>
            <person name="Mitterbauer R."/>
            <person name="Muehlbauer G."/>
            <person name="Muensterkoetter M."/>
            <person name="Nelson D."/>
            <person name="O'Donnell K."/>
            <person name="Ouellet T."/>
            <person name="Qi W."/>
            <person name="Quesneville H."/>
            <person name="Roncero M.I.G."/>
            <person name="Seong K.-Y."/>
            <person name="Tetko I.V."/>
            <person name="Urban M."/>
            <person name="Waalwijk C."/>
            <person name="Ward T.J."/>
            <person name="Yao J."/>
            <person name="Birren B.W."/>
            <person name="Kistler H.C."/>
        </authorList>
    </citation>
    <scope>NUCLEOTIDE SEQUENCE [LARGE SCALE GENOMIC DNA]</scope>
    <source>
        <strain>ATCC MYA-4620 / CBS 123657 / FGSC 9075 / NRRL 31084 / PH-1</strain>
    </source>
</reference>
<reference key="2">
    <citation type="journal article" date="2010" name="Nature">
        <title>Comparative genomics reveals mobile pathogenicity chromosomes in Fusarium.</title>
        <authorList>
            <person name="Ma L.-J."/>
            <person name="van der Does H.C."/>
            <person name="Borkovich K.A."/>
            <person name="Coleman J.J."/>
            <person name="Daboussi M.-J."/>
            <person name="Di Pietro A."/>
            <person name="Dufresne M."/>
            <person name="Freitag M."/>
            <person name="Grabherr M."/>
            <person name="Henrissat B."/>
            <person name="Houterman P.M."/>
            <person name="Kang S."/>
            <person name="Shim W.-B."/>
            <person name="Woloshuk C."/>
            <person name="Xie X."/>
            <person name="Xu J.-R."/>
            <person name="Antoniw J."/>
            <person name="Baker S.E."/>
            <person name="Bluhm B.H."/>
            <person name="Breakspear A."/>
            <person name="Brown D.W."/>
            <person name="Butchko R.A.E."/>
            <person name="Chapman S."/>
            <person name="Coulson R."/>
            <person name="Coutinho P.M."/>
            <person name="Danchin E.G.J."/>
            <person name="Diener A."/>
            <person name="Gale L.R."/>
            <person name="Gardiner D.M."/>
            <person name="Goff S."/>
            <person name="Hammond-Kosack K.E."/>
            <person name="Hilburn K."/>
            <person name="Hua-Van A."/>
            <person name="Jonkers W."/>
            <person name="Kazan K."/>
            <person name="Kodira C.D."/>
            <person name="Koehrsen M."/>
            <person name="Kumar L."/>
            <person name="Lee Y.-H."/>
            <person name="Li L."/>
            <person name="Manners J.M."/>
            <person name="Miranda-Saavedra D."/>
            <person name="Mukherjee M."/>
            <person name="Park G."/>
            <person name="Park J."/>
            <person name="Park S.-Y."/>
            <person name="Proctor R.H."/>
            <person name="Regev A."/>
            <person name="Ruiz-Roldan M.C."/>
            <person name="Sain D."/>
            <person name="Sakthikumar S."/>
            <person name="Sykes S."/>
            <person name="Schwartz D.C."/>
            <person name="Turgeon B.G."/>
            <person name="Wapinski I."/>
            <person name="Yoder O."/>
            <person name="Young S."/>
            <person name="Zeng Q."/>
            <person name="Zhou S."/>
            <person name="Galagan J."/>
            <person name="Cuomo C.A."/>
            <person name="Kistler H.C."/>
            <person name="Rep M."/>
        </authorList>
    </citation>
    <scope>GENOME REANNOTATION</scope>
    <source>
        <strain>ATCC MYA-4620 / CBS 123657 / FGSC 9075 / NRRL 31084 / PH-1</strain>
    </source>
</reference>
<reference key="3">
    <citation type="journal article" date="2015" name="BMC Genomics">
        <title>The completed genome sequence of the pathogenic ascomycete fungus Fusarium graminearum.</title>
        <authorList>
            <person name="King R."/>
            <person name="Urban M."/>
            <person name="Hammond-Kosack M.C.U."/>
            <person name="Hassani-Pak K."/>
            <person name="Hammond-Kosack K.E."/>
        </authorList>
    </citation>
    <scope>NUCLEOTIDE SEQUENCE [LARGE SCALE GENOMIC DNA]</scope>
    <source>
        <strain>ATCC MYA-4620 / CBS 123657 / FGSC 9075 / NRRL 31084 / PH-1</strain>
    </source>
</reference>
<evidence type="ECO:0000250" key="1"/>
<evidence type="ECO:0000305" key="2"/>
<sequence>MALETVTLEHLPASHKVYVALFRGVKNAAFLHQQLLARNPEFEYAFIDASVVVSRLQLLSAVFKATSTAVNGALRTPNVHSEIVCTMSSSNNIADAYRRYGISPSTQDLVVVKVTFPGEDGAEPLTQDQIWEHLKTNVEGEAVSITDEQISIATDVPKVRKYYKLNGLKWLDDIQDEKVKQKEMESLVIGAMALRGV</sequence>
<organism>
    <name type="scientific">Gibberella zeae (strain ATCC MYA-4620 / CBS 123657 / FGSC 9075 / NRRL 31084 / PH-1)</name>
    <name type="common">Wheat head blight fungus</name>
    <name type="synonym">Fusarium graminearum</name>
    <dbReference type="NCBI Taxonomy" id="229533"/>
    <lineage>
        <taxon>Eukaryota</taxon>
        <taxon>Fungi</taxon>
        <taxon>Dikarya</taxon>
        <taxon>Ascomycota</taxon>
        <taxon>Pezizomycotina</taxon>
        <taxon>Sordariomycetes</taxon>
        <taxon>Hypocreomycetidae</taxon>
        <taxon>Hypocreales</taxon>
        <taxon>Nectriaceae</taxon>
        <taxon>Fusarium</taxon>
    </lineage>
</organism>
<proteinExistence type="inferred from homology"/>
<feature type="chain" id="PRO_0000279213" description="EKC/KEOPS complex subunit CGI121">
    <location>
        <begin position="1"/>
        <end position="197"/>
    </location>
</feature>
<protein>
    <recommendedName>
        <fullName>EKC/KEOPS complex subunit CGI121</fullName>
    </recommendedName>
</protein>
<dbReference type="EMBL" id="DS231665">
    <property type="protein sequence ID" value="ESU10778.1"/>
    <property type="molecule type" value="Genomic_DNA"/>
</dbReference>
<dbReference type="EMBL" id="HG970334">
    <property type="protein sequence ID" value="CEF85842.1"/>
    <property type="molecule type" value="Genomic_DNA"/>
</dbReference>
<dbReference type="RefSeq" id="XP_011323354.1">
    <property type="nucleotide sequence ID" value="XM_011325052.1"/>
</dbReference>
<dbReference type="SMR" id="Q4ID21"/>
<dbReference type="FunCoup" id="Q4ID21">
    <property type="interactions" value="503"/>
</dbReference>
<dbReference type="STRING" id="229533.Q4ID21"/>
<dbReference type="GeneID" id="23552089"/>
<dbReference type="KEGG" id="fgr:FGSG_04887"/>
<dbReference type="VEuPathDB" id="FungiDB:FGRAMPH1_01G16563"/>
<dbReference type="eggNOG" id="KOG4066">
    <property type="taxonomic scope" value="Eukaryota"/>
</dbReference>
<dbReference type="HOGENOM" id="CLU_065847_1_0_1"/>
<dbReference type="InParanoid" id="Q4ID21"/>
<dbReference type="OrthoDB" id="70621at110618"/>
<dbReference type="Proteomes" id="UP000070720">
    <property type="component" value="Chromosome 3"/>
</dbReference>
<dbReference type="GO" id="GO:0000781">
    <property type="term" value="C:chromosome, telomeric region"/>
    <property type="evidence" value="ECO:0007669"/>
    <property type="project" value="UniProtKB-SubCell"/>
</dbReference>
<dbReference type="GO" id="GO:0005829">
    <property type="term" value="C:cytosol"/>
    <property type="evidence" value="ECO:0007669"/>
    <property type="project" value="TreeGrafter"/>
</dbReference>
<dbReference type="GO" id="GO:0000408">
    <property type="term" value="C:EKC/KEOPS complex"/>
    <property type="evidence" value="ECO:0007669"/>
    <property type="project" value="TreeGrafter"/>
</dbReference>
<dbReference type="GO" id="GO:0005634">
    <property type="term" value="C:nucleus"/>
    <property type="evidence" value="ECO:0007669"/>
    <property type="project" value="UniProtKB-SubCell"/>
</dbReference>
<dbReference type="GO" id="GO:0002949">
    <property type="term" value="P:tRNA threonylcarbamoyladenosine modification"/>
    <property type="evidence" value="ECO:0007669"/>
    <property type="project" value="TreeGrafter"/>
</dbReference>
<dbReference type="Gene3D" id="3.30.2380.10">
    <property type="entry name" value="CGI121/TPRKB"/>
    <property type="match status" value="1"/>
</dbReference>
<dbReference type="InterPro" id="IPR013926">
    <property type="entry name" value="CGI121/TPRKB"/>
</dbReference>
<dbReference type="InterPro" id="IPR036504">
    <property type="entry name" value="CGI121/TPRKB_sf"/>
</dbReference>
<dbReference type="PANTHER" id="PTHR15840">
    <property type="entry name" value="CGI-121 FAMILY MEMBER"/>
    <property type="match status" value="1"/>
</dbReference>
<dbReference type="PANTHER" id="PTHR15840:SF10">
    <property type="entry name" value="EKC_KEOPS COMPLEX SUBUNIT TPRKB"/>
    <property type="match status" value="1"/>
</dbReference>
<dbReference type="Pfam" id="PF08617">
    <property type="entry name" value="CGI-121"/>
    <property type="match status" value="1"/>
</dbReference>
<dbReference type="SUPFAM" id="SSF143870">
    <property type="entry name" value="PF0523-like"/>
    <property type="match status" value="1"/>
</dbReference>
<keyword id="KW-0010">Activator</keyword>
<keyword id="KW-0158">Chromosome</keyword>
<keyword id="KW-0539">Nucleus</keyword>
<keyword id="KW-1185">Reference proteome</keyword>
<keyword id="KW-0779">Telomere</keyword>
<keyword id="KW-0804">Transcription</keyword>
<keyword id="KW-0805">Transcription regulation</keyword>
<keyword id="KW-0819">tRNA processing</keyword>